<feature type="chain" id="PRO_0000367898" description="Leucine zipper putative tumor suppressor 2 homolog">
    <location>
        <begin position="1"/>
        <end position="683"/>
    </location>
</feature>
<feature type="region of interest" description="Disordered" evidence="2">
    <location>
        <begin position="1"/>
        <end position="37"/>
    </location>
</feature>
<feature type="region of interest" description="Disordered" evidence="2">
    <location>
        <begin position="82"/>
        <end position="107"/>
    </location>
</feature>
<feature type="region of interest" description="Disordered" evidence="2">
    <location>
        <begin position="262"/>
        <end position="320"/>
    </location>
</feature>
<feature type="coiled-coil region" evidence="1">
    <location>
        <begin position="324"/>
        <end position="665"/>
    </location>
</feature>
<feature type="compositionally biased region" description="Polar residues" evidence="2">
    <location>
        <begin position="11"/>
        <end position="37"/>
    </location>
</feature>
<feature type="compositionally biased region" description="Polar residues" evidence="2">
    <location>
        <begin position="96"/>
        <end position="107"/>
    </location>
</feature>
<feature type="compositionally biased region" description="Low complexity" evidence="2">
    <location>
        <begin position="290"/>
        <end position="308"/>
    </location>
</feature>
<keyword id="KW-0131">Cell cycle</keyword>
<keyword id="KW-0132">Cell division</keyword>
<keyword id="KW-0175">Coiled coil</keyword>
<keyword id="KW-0963">Cytoplasm</keyword>
<keyword id="KW-0206">Cytoskeleton</keyword>
<keyword id="KW-0493">Microtubule</keyword>
<keyword id="KW-0498">Mitosis</keyword>
<keyword id="KW-1185">Reference proteome</keyword>
<keyword id="KW-0879">Wnt signaling pathway</keyword>
<gene>
    <name type="primary">lzts2</name>
    <name type="synonym">lapser1</name>
</gene>
<name>LZTS2_XENTR</name>
<reference key="1">
    <citation type="submission" date="2004-06" db="EMBL/GenBank/DDBJ databases">
        <authorList>
            <consortium name="NIH - Xenopus Gene Collection (XGC) project"/>
        </authorList>
    </citation>
    <scope>NUCLEOTIDE SEQUENCE [LARGE SCALE MRNA]</scope>
    <source>
        <tissue>Embryo</tissue>
    </source>
</reference>
<organism>
    <name type="scientific">Xenopus tropicalis</name>
    <name type="common">Western clawed frog</name>
    <name type="synonym">Silurana tropicalis</name>
    <dbReference type="NCBI Taxonomy" id="8364"/>
    <lineage>
        <taxon>Eukaryota</taxon>
        <taxon>Metazoa</taxon>
        <taxon>Chordata</taxon>
        <taxon>Craniata</taxon>
        <taxon>Vertebrata</taxon>
        <taxon>Euteleostomi</taxon>
        <taxon>Amphibia</taxon>
        <taxon>Batrachia</taxon>
        <taxon>Anura</taxon>
        <taxon>Pipoidea</taxon>
        <taxon>Pipidae</taxon>
        <taxon>Xenopodinae</taxon>
        <taxon>Xenopus</taxon>
        <taxon>Silurana</taxon>
    </lineage>
</organism>
<comment type="function">
    <text evidence="1">Negative regulator of katanin-mediated microtubule severing and release from the centrosome. Required for central spindle formation and the completion of cytokinesis. Negative regulator of the Wnt signaling pathway. Represses beta-catenin-mediated transcriptional activation by promoting the nuclear exclusion of beta-catenin.</text>
</comment>
<comment type="subcellular location">
    <subcellularLocation>
        <location evidence="1">Cytoplasm</location>
    </subcellularLocation>
    <subcellularLocation>
        <location evidence="1">Cytoplasm</location>
        <location evidence="1">Cytoskeleton</location>
        <location evidence="1">Microtubule organizing center</location>
        <location evidence="1">Centrosome</location>
    </subcellularLocation>
</comment>
<comment type="similarity">
    <text evidence="1">Belongs to the LZTS2 family.</text>
</comment>
<dbReference type="EMBL" id="BC075457">
    <property type="protein sequence ID" value="AAH75457.1"/>
    <property type="molecule type" value="mRNA"/>
</dbReference>
<dbReference type="RefSeq" id="NP_001006721.1">
    <property type="nucleotide sequence ID" value="NM_001006720.1"/>
</dbReference>
<dbReference type="RefSeq" id="XP_012821843.1">
    <property type="nucleotide sequence ID" value="XM_012966389.3"/>
</dbReference>
<dbReference type="RefSeq" id="XP_012821845.1">
    <property type="nucleotide sequence ID" value="XM_012966391.1"/>
</dbReference>
<dbReference type="RefSeq" id="XP_031760853.1">
    <property type="nucleotide sequence ID" value="XM_031904993.1"/>
</dbReference>
<dbReference type="SMR" id="Q6DIS8"/>
<dbReference type="FunCoup" id="Q6DIS8">
    <property type="interactions" value="1083"/>
</dbReference>
<dbReference type="STRING" id="8364.ENSXETP00000002807"/>
<dbReference type="PaxDb" id="8364-ENSXETP00000033260"/>
<dbReference type="DNASU" id="448373"/>
<dbReference type="GeneID" id="448373"/>
<dbReference type="KEGG" id="xtr:448373"/>
<dbReference type="AGR" id="Xenbase:XB-GENE-1216151"/>
<dbReference type="CTD" id="84445"/>
<dbReference type="Xenbase" id="XB-GENE-1216151">
    <property type="gene designation" value="lzts2"/>
</dbReference>
<dbReference type="eggNOG" id="ENOG502QWFS">
    <property type="taxonomic scope" value="Eukaryota"/>
</dbReference>
<dbReference type="HOGENOM" id="CLU_026379_2_0_1"/>
<dbReference type="InParanoid" id="Q6DIS8"/>
<dbReference type="OMA" id="LQHNYVQ"/>
<dbReference type="OrthoDB" id="10030037at2759"/>
<dbReference type="PhylomeDB" id="Q6DIS8"/>
<dbReference type="TreeFam" id="TF331420"/>
<dbReference type="Proteomes" id="UP000008143">
    <property type="component" value="Chromosome 7"/>
</dbReference>
<dbReference type="Bgee" id="ENSXETG00000015201">
    <property type="expression patterns" value="Expressed in skeletal muscle tissue and 14 other cell types or tissues"/>
</dbReference>
<dbReference type="GO" id="GO:0005813">
    <property type="term" value="C:centrosome"/>
    <property type="evidence" value="ECO:0007669"/>
    <property type="project" value="UniProtKB-SubCell"/>
</dbReference>
<dbReference type="GO" id="GO:0005737">
    <property type="term" value="C:cytoplasm"/>
    <property type="evidence" value="ECO:0007669"/>
    <property type="project" value="UniProtKB-SubCell"/>
</dbReference>
<dbReference type="GO" id="GO:0005874">
    <property type="term" value="C:microtubule"/>
    <property type="evidence" value="ECO:0007669"/>
    <property type="project" value="UniProtKB-KW"/>
</dbReference>
<dbReference type="GO" id="GO:0030496">
    <property type="term" value="C:midbody"/>
    <property type="evidence" value="ECO:0007669"/>
    <property type="project" value="UniProtKB-UniRule"/>
</dbReference>
<dbReference type="GO" id="GO:0051013">
    <property type="term" value="P:microtubule severing"/>
    <property type="evidence" value="ECO:0007669"/>
    <property type="project" value="UniProtKB-UniRule"/>
</dbReference>
<dbReference type="GO" id="GO:0000281">
    <property type="term" value="P:mitotic cytokinesis"/>
    <property type="evidence" value="ECO:0007669"/>
    <property type="project" value="UniProtKB-UniRule"/>
</dbReference>
<dbReference type="GO" id="GO:0030178">
    <property type="term" value="P:negative regulation of Wnt signaling pathway"/>
    <property type="evidence" value="ECO:0007669"/>
    <property type="project" value="UniProtKB-UniRule"/>
</dbReference>
<dbReference type="GO" id="GO:0051168">
    <property type="term" value="P:nuclear export"/>
    <property type="evidence" value="ECO:0007669"/>
    <property type="project" value="UniProtKB-UniRule"/>
</dbReference>
<dbReference type="GO" id="GO:0051255">
    <property type="term" value="P:spindle midzone assembly"/>
    <property type="evidence" value="ECO:0007669"/>
    <property type="project" value="UniProtKB-UniRule"/>
</dbReference>
<dbReference type="GO" id="GO:0016055">
    <property type="term" value="P:Wnt signaling pathway"/>
    <property type="evidence" value="ECO:0007669"/>
    <property type="project" value="UniProtKB-KW"/>
</dbReference>
<dbReference type="HAMAP" id="MF_03026">
    <property type="entry name" value="LZTS2"/>
    <property type="match status" value="1"/>
</dbReference>
<dbReference type="InterPro" id="IPR045329">
    <property type="entry name" value="LZTS"/>
</dbReference>
<dbReference type="InterPro" id="IPR028597">
    <property type="entry name" value="LZTS2"/>
</dbReference>
<dbReference type="PANTHER" id="PTHR19354">
    <property type="entry name" value="ZIPPER PUTATIVE TUMOR SUPPRESSOR 2 HOMOLOG-LIKE PROTEIN-RELATED"/>
    <property type="match status" value="1"/>
</dbReference>
<dbReference type="PANTHER" id="PTHR19354:SF4">
    <property type="entry name" value="ZIPPER PUTATIVE TUMOR SUPPRESSOR 2-RELATED"/>
    <property type="match status" value="1"/>
</dbReference>
<dbReference type="Pfam" id="PF06818">
    <property type="entry name" value="Fez1"/>
    <property type="match status" value="1"/>
</dbReference>
<sequence>MAALQALPLSIDQNAEVSGSQSHTNTRSPVTENTMGSVSSLISGRTYHDKQCKASELSNKCRKPTNMPNCFKQQEGLIKSNYSSQDPLFNGLPTKKPSTTTSGNNGNYVYVNEDFKEEWHEPRVPISPSSDAEDIREERALNGNIRGPPPKLIPVSGKLEKNVEKTLIKPTAFKPVVPKKRNSSLQYLVQRNGGPGLSESQSSLNLLFNGNAAGIPEKHNLLSCRNSTHSGTMSDSGRTSLSSLPTYSTNCSHQMDPVSVSMGHINLDNHTNINGYSDRAPRGRTRPTNSDSGRSSSSKSTGSLSGRGNPSSDSGSCDRSPILSDEILIRELEEKLKDREMELQQLKENLDENEAAICQVYEEKQKRCEQEMEELRQSCALKMKQAAQKAQRLQQVLQLQIFQLQQEKKKLQEDFSQLLQERELLEKRCASFEREQTEFGPRLEETKWEVCQKSGEISLLKQQLKDSQAELAQKSNEILLLRAQVREARSDLQISEEQVQELQDTAHTKTLELEVCENELQRKKNEAELLREKASKLDQEVAGLREAAVANLRHGLCLCHEKEDPFLLYESDEAKAQRQNADNLQGLQQYVERLREALTSERRRYQEQADSFEDERRIWQEEKEKVIRYQKQLQHNYIQMYQQNRELERDIKQLSLELEARELDEFDLHGAEIQFEEITATEI</sequence>
<protein>
    <recommendedName>
        <fullName evidence="1">Leucine zipper putative tumor suppressor 2 homolog</fullName>
    </recommendedName>
    <alternativeName>
        <fullName evidence="1">Protein lapser1</fullName>
    </alternativeName>
</protein>
<accession>Q6DIS8</accession>
<evidence type="ECO:0000255" key="1">
    <source>
        <dbReference type="HAMAP-Rule" id="MF_03026"/>
    </source>
</evidence>
<evidence type="ECO:0000256" key="2">
    <source>
        <dbReference type="SAM" id="MobiDB-lite"/>
    </source>
</evidence>
<proteinExistence type="evidence at transcript level"/>